<protein>
    <recommendedName>
        <fullName>Serine/threonine-protein kinase BRSK2</fullName>
        <ecNumber>2.7.11.1</ecNumber>
        <ecNumber>2.7.11.26</ecNumber>
    </recommendedName>
    <alternativeName>
        <fullName>Brain-specific serine/threonine-protein kinase 2</fullName>
        <shortName>BR serine/threonine-protein kinase 2</shortName>
    </alternativeName>
    <alternativeName>
        <fullName>Serine/threonine-protein kinase SAD-A</fullName>
    </alternativeName>
</protein>
<comment type="function">
    <text evidence="7 8 9 10 11">Serine/threonine-protein kinase that plays a key role in polarization of neurons and axonogenesis, cell cycle progress and insulin secretion. Phosphorylates CDK16, CDC25C, MAPT/TAU, PAK1 and WEE1. Following phosphorylation and activation by STK11/LKB1, acts as a key regulator of polarization of cortical neurons, probably by mediating phosphorylation of microtubule-associated proteins such as MAPT/TAU at 'Thr-504' and 'Ser-554'. Also regulates neuron polarization by mediating phosphorylation of WEE1 at 'Ser-642' in post-mitotic neurons, leading to down-regulate WEE1 activity in polarized neurons. Plays a role in the regulation of the mitotic cell cycle progress and the onset of mitosis. Plays a role in the regulation of insulin secretion in response to elevated glucose levels, probably via phosphorylation of CDK16 and PAK1. While BRSK2 phosphorylated at Thr-175 can inhibit insulin secretion (PubMed:22798068), BRSK2 phosphorylated at Thr-261 can promote insulin secretion (PubMed:22669945). Regulates reorganization of the actin cytoskeleton. May play a role in the apoptotic response triggered by endoplasmic reticulum (ER) stress.</text>
</comment>
<comment type="catalytic activity">
    <reaction evidence="10">
        <text>L-seryl-[protein] + ATP = O-phospho-L-seryl-[protein] + ADP + H(+)</text>
        <dbReference type="Rhea" id="RHEA:17989"/>
        <dbReference type="Rhea" id="RHEA-COMP:9863"/>
        <dbReference type="Rhea" id="RHEA-COMP:11604"/>
        <dbReference type="ChEBI" id="CHEBI:15378"/>
        <dbReference type="ChEBI" id="CHEBI:29999"/>
        <dbReference type="ChEBI" id="CHEBI:30616"/>
        <dbReference type="ChEBI" id="CHEBI:83421"/>
        <dbReference type="ChEBI" id="CHEBI:456216"/>
        <dbReference type="EC" id="2.7.11.1"/>
    </reaction>
</comment>
<comment type="catalytic activity">
    <reaction evidence="10">
        <text>L-threonyl-[protein] + ATP = O-phospho-L-threonyl-[protein] + ADP + H(+)</text>
        <dbReference type="Rhea" id="RHEA:46608"/>
        <dbReference type="Rhea" id="RHEA-COMP:11060"/>
        <dbReference type="Rhea" id="RHEA-COMP:11605"/>
        <dbReference type="ChEBI" id="CHEBI:15378"/>
        <dbReference type="ChEBI" id="CHEBI:30013"/>
        <dbReference type="ChEBI" id="CHEBI:30616"/>
        <dbReference type="ChEBI" id="CHEBI:61977"/>
        <dbReference type="ChEBI" id="CHEBI:456216"/>
        <dbReference type="EC" id="2.7.11.1"/>
    </reaction>
</comment>
<comment type="catalytic activity">
    <reaction evidence="10">
        <text>L-seryl-[tau protein] + ATP = O-phospho-L-seryl-[tau protein] + ADP + H(+)</text>
        <dbReference type="Rhea" id="RHEA:12801"/>
        <dbReference type="Rhea" id="RHEA-COMP:13701"/>
        <dbReference type="Rhea" id="RHEA-COMP:13702"/>
        <dbReference type="ChEBI" id="CHEBI:15378"/>
        <dbReference type="ChEBI" id="CHEBI:29999"/>
        <dbReference type="ChEBI" id="CHEBI:30616"/>
        <dbReference type="ChEBI" id="CHEBI:83421"/>
        <dbReference type="ChEBI" id="CHEBI:456216"/>
        <dbReference type="EC" id="2.7.11.26"/>
    </reaction>
</comment>
<comment type="catalytic activity">
    <reaction evidence="10">
        <text>L-threonyl-[tau protein] + ATP = O-phospho-L-threonyl-[tau protein] + ADP + H(+)</text>
        <dbReference type="Rhea" id="RHEA:53904"/>
        <dbReference type="Rhea" id="RHEA-COMP:13703"/>
        <dbReference type="Rhea" id="RHEA-COMP:13704"/>
        <dbReference type="ChEBI" id="CHEBI:15378"/>
        <dbReference type="ChEBI" id="CHEBI:30013"/>
        <dbReference type="ChEBI" id="CHEBI:30616"/>
        <dbReference type="ChEBI" id="CHEBI:61977"/>
        <dbReference type="ChEBI" id="CHEBI:456216"/>
        <dbReference type="EC" id="2.7.11.26"/>
    </reaction>
</comment>
<comment type="cofactor">
    <cofactor evidence="1">
        <name>Mg(2+)</name>
        <dbReference type="ChEBI" id="CHEBI:18420"/>
    </cofactor>
</comment>
<comment type="activity regulation">
    <text>Activated by phosphorylation on Thr-175 by STK11/LKB1.</text>
</comment>
<comment type="subunit">
    <text evidence="1">Interacts with FZR1, a regulatory subunit of the APC ubiquitin ligase complex. Interacts with COPS5. Interacts with PAK1 (By similarity).</text>
</comment>
<comment type="subcellular location">
    <subcellularLocation>
        <location evidence="1">Cytoplasm</location>
        <location evidence="1">Cytoskeleton</location>
        <location evidence="1">Microtubule organizing center</location>
        <location evidence="1">Centrosome</location>
    </subcellularLocation>
    <subcellularLocation>
        <location evidence="1">Cytoplasm</location>
        <location evidence="1">Perinuclear region</location>
    </subcellularLocation>
    <subcellularLocation>
        <location evidence="1">Endoplasmic reticulum</location>
    </subcellularLocation>
    <text evidence="1">Detected at centrosomes during mitosis. Localizes to the endoplasmic reticulum in response to stress caused by tunicamycin (By similarity).</text>
</comment>
<comment type="alternative products">
    <event type="alternative splicing"/>
    <isoform>
        <id>Q69Z98-1</id>
        <name>1</name>
        <sequence type="displayed"/>
    </isoform>
    <isoform>
        <id>Q69Z98-2</id>
        <name>2</name>
        <name>SADA-beta</name>
        <sequence type="described" ref="VSP_022605"/>
    </isoform>
    <isoform>
        <id>Q69Z98-3</id>
        <name>3</name>
        <name>SADA-gamma</name>
        <sequence type="described" ref="VSP_022606"/>
    </isoform>
    <isoform>
        <id>Q69Z98-4</id>
        <name>4</name>
        <name>SADA-alpha</name>
        <sequence type="described" ref="VSP_022607 VSP_022608"/>
    </isoform>
</comment>
<comment type="tissue specificity">
    <text evidence="11">Detected in pancreas islets and in brain (at protein level). Detected in brain and pancreas.</text>
</comment>
<comment type="domain">
    <text evidence="1">The KEN box motif is required for interaction with FZR1/CDH1 and essential for APC(CDH1)-mediated ubiquitination.</text>
</comment>
<comment type="PTM">
    <text evidence="1 8">May be phosphorylated at Thr-261 by PKA (By similarity). Phosphorylated at Thr-175 by STK11/LKB1 in complex with STE20-related adapter-alpha (STRADA) pseudo kinase and CAB39. Not phosphorylated at Thr-175 by CaMKK2. In contrast, it is phosphorylated and activated by CaMKK1. May be inactivated via dephosphorylation of Thr-175 by PP2C.</text>
</comment>
<comment type="PTM">
    <text evidence="1">Polyubiquitinated by the APC complex in conjunction with FZR1, leading to its proteasomal degradation. Targeted for proteasomal degradation by interaction with COPS5. BRSK2 levels change during the cell cycle. BRSK2 levels are low at the G1/S boundary and gradually increase as cells progress into G2 phase. BRSK2 levels decrease rapidly at the end of mitosis (By similarity).</text>
</comment>
<comment type="disruption phenotype">
    <text evidence="7">No visible phenotype. Mice are fertile and healthy. In contrast, mice lacking both Brsk1 and Brsk2 show little spontaneous movement and are only weakly responsive to tactile stimulation: they die within 2 hours of birth. Defects are due to impaired neuronal differentiation and polarity.</text>
</comment>
<comment type="similarity">
    <text evidence="15">Belongs to the protein kinase superfamily. CAMK Ser/Thr protein kinase family. SNF1 subfamily.</text>
</comment>
<evidence type="ECO:0000250" key="1"/>
<evidence type="ECO:0000250" key="2">
    <source>
        <dbReference type="UniProtKB" id="D3ZML2"/>
    </source>
</evidence>
<evidence type="ECO:0000250" key="3">
    <source>
        <dbReference type="UniProtKB" id="Q8IWQ3"/>
    </source>
</evidence>
<evidence type="ECO:0000255" key="4">
    <source>
        <dbReference type="PROSITE-ProRule" id="PRU00159"/>
    </source>
</evidence>
<evidence type="ECO:0000255" key="5">
    <source>
        <dbReference type="PROSITE-ProRule" id="PRU10027"/>
    </source>
</evidence>
<evidence type="ECO:0000256" key="6">
    <source>
        <dbReference type="SAM" id="MobiDB-lite"/>
    </source>
</evidence>
<evidence type="ECO:0000269" key="7">
    <source>
    </source>
</evidence>
<evidence type="ECO:0000269" key="8">
    <source>
    </source>
</evidence>
<evidence type="ECO:0000269" key="9">
    <source>
    </source>
</evidence>
<evidence type="ECO:0000269" key="10">
    <source>
    </source>
</evidence>
<evidence type="ECO:0000269" key="11">
    <source>
    </source>
</evidence>
<evidence type="ECO:0000303" key="12">
    <source>
    </source>
</evidence>
<evidence type="ECO:0000303" key="13">
    <source>
    </source>
</evidence>
<evidence type="ECO:0000303" key="14">
    <source ref="2"/>
</evidence>
<evidence type="ECO:0000305" key="15"/>
<evidence type="ECO:0007744" key="16">
    <source>
    </source>
</evidence>
<evidence type="ECO:0007829" key="17">
    <source>
        <dbReference type="PDB" id="4YNZ"/>
    </source>
</evidence>
<evidence type="ECO:0007829" key="18">
    <source>
        <dbReference type="PDB" id="4YOM"/>
    </source>
</evidence>
<proteinExistence type="evidence at protein level"/>
<gene>
    <name type="primary">Brsk2</name>
    <name type="synonym">Kiaa4256</name>
    <name type="synonym">Sada</name>
</gene>
<feature type="chain" id="PRO_0000274036" description="Serine/threonine-protein kinase BRSK2">
    <location>
        <begin position="1"/>
        <end position="735"/>
    </location>
</feature>
<feature type="domain" description="Protein kinase" evidence="4">
    <location>
        <begin position="20"/>
        <end position="271"/>
    </location>
</feature>
<feature type="domain" description="UBA">
    <location>
        <begin position="298"/>
        <end position="340"/>
    </location>
</feature>
<feature type="region of interest" description="Disordered" evidence="6">
    <location>
        <begin position="346"/>
        <end position="476"/>
    </location>
</feature>
<feature type="region of interest" description="Disordered" evidence="6">
    <location>
        <begin position="492"/>
        <end position="516"/>
    </location>
</feature>
<feature type="region of interest" description="Disordered" evidence="6">
    <location>
        <begin position="682"/>
        <end position="735"/>
    </location>
</feature>
<feature type="short sequence motif" description="KEN box" evidence="1">
    <location>
        <begin position="604"/>
        <end position="606"/>
    </location>
</feature>
<feature type="compositionally biased region" description="Basic and acidic residues" evidence="6">
    <location>
        <begin position="346"/>
        <end position="367"/>
    </location>
</feature>
<feature type="compositionally biased region" description="Low complexity" evidence="6">
    <location>
        <begin position="411"/>
        <end position="429"/>
    </location>
</feature>
<feature type="compositionally biased region" description="Pro residues" evidence="6">
    <location>
        <begin position="432"/>
        <end position="446"/>
    </location>
</feature>
<feature type="active site" description="Proton acceptor" evidence="4 5">
    <location>
        <position position="142"/>
    </location>
</feature>
<feature type="binding site" evidence="4">
    <location>
        <begin position="26"/>
        <end position="34"/>
    </location>
    <ligand>
        <name>ATP</name>
        <dbReference type="ChEBI" id="CHEBI:30616"/>
    </ligand>
</feature>
<feature type="binding site" evidence="4">
    <location>
        <position position="49"/>
    </location>
    <ligand>
        <name>ATP</name>
        <dbReference type="ChEBI" id="CHEBI:30616"/>
    </ligand>
</feature>
<feature type="modified residue" description="Phosphothreonine; by LKB1" evidence="8">
    <location>
        <position position="175"/>
    </location>
</feature>
<feature type="modified residue" description="Phosphothreonine; by PKA" evidence="3">
    <location>
        <position position="261"/>
    </location>
</feature>
<feature type="modified residue" description="Phosphoserine" evidence="2">
    <location>
        <position position="295"/>
    </location>
</feature>
<feature type="modified residue" description="Phosphoserine" evidence="3">
    <location>
        <position position="368"/>
    </location>
</feature>
<feature type="modified residue" description="Phosphoserine" evidence="16">
    <location>
        <position position="383"/>
    </location>
</feature>
<feature type="modified residue" description="Phosphoserine" evidence="16">
    <location>
        <position position="394"/>
    </location>
</feature>
<feature type="modified residue" description="Phosphoserine" evidence="16">
    <location>
        <position position="413"/>
    </location>
</feature>
<feature type="modified residue" description="Phosphoserine" evidence="16">
    <location>
        <position position="424"/>
    </location>
</feature>
<feature type="modified residue" description="Phosphoserine" evidence="16">
    <location>
        <position position="428"/>
    </location>
</feature>
<feature type="modified residue" description="Phosphoserine" evidence="16">
    <location>
        <position position="456"/>
    </location>
</feature>
<feature type="modified residue" description="Phosphothreonine" evidence="16">
    <location>
        <position position="460"/>
    </location>
</feature>
<feature type="modified residue" description="Phosphothreonine" evidence="16">
    <location>
        <position position="464"/>
    </location>
</feature>
<feature type="modified residue" description="Phosphothreonine" evidence="16">
    <location>
        <position position="510"/>
    </location>
</feature>
<feature type="modified residue" description="Phosphoserine" evidence="16">
    <location>
        <position position="513"/>
    </location>
</feature>
<feature type="modified residue" description="Phosphoserine" evidence="16">
    <location>
        <position position="514"/>
    </location>
</feature>
<feature type="modified residue" description="Phosphoserine" evidence="16">
    <location>
        <position position="521"/>
    </location>
</feature>
<feature type="splice variant" id="VSP_022605" description="In isoform 2." evidence="13">
    <original>DTTNCMEVMTGRLSKCGTPLSNFFDVIKQLFSDEKNGQAAQAPSTPAKRSAHGPLGDSAAAGPGGDTEYPMGKDMAKMGPPAARREQP</original>
    <variation>EPPPPAPGLSWGAGLKGQKVATSYESSL</variation>
    <location>
        <begin position="648"/>
        <end position="735"/>
    </location>
</feature>
<feature type="splice variant" id="VSP_022607" description="In isoform 4." evidence="12 13 14">
    <original>DTTNCM</original>
    <variation>GIIPKS</variation>
    <location>
        <begin position="648"/>
        <end position="653"/>
    </location>
</feature>
<feature type="splice variant" id="VSP_022608" description="In isoform 4." evidence="12 13 14">
    <location>
        <begin position="654"/>
        <end position="735"/>
    </location>
</feature>
<feature type="splice variant" id="VSP_022606" description="In isoform 3." evidence="13">
    <location>
        <begin position="664"/>
        <end position="679"/>
    </location>
</feature>
<feature type="mutagenesis site" description="Loss of kinase activity." evidence="7">
    <original>K</original>
    <variation>A</variation>
    <location>
        <position position="49"/>
    </location>
</feature>
<feature type="mutagenesis site" description="Prevents phosphorylation and activation by STK11/LKB1 complex." evidence="8">
    <original>T</original>
    <variation>A</variation>
    <location>
        <position position="175"/>
    </location>
</feature>
<feature type="sequence conflict" description="In Ref. 4; BAD32546." evidence="15" ref="4">
    <original>TGLVKLGIHCVTC</original>
    <variation>VDGDLLASDTVDS</variation>
    <location>
        <begin position="31"/>
        <end position="43"/>
    </location>
</feature>
<feature type="strand" evidence="17">
    <location>
        <begin position="15"/>
        <end position="17"/>
    </location>
</feature>
<feature type="strand" evidence="17">
    <location>
        <begin position="20"/>
        <end position="29"/>
    </location>
</feature>
<feature type="strand" evidence="17">
    <location>
        <begin position="32"/>
        <end position="39"/>
    </location>
</feature>
<feature type="turn" evidence="17">
    <location>
        <begin position="40"/>
        <end position="42"/>
    </location>
</feature>
<feature type="strand" evidence="17">
    <location>
        <begin position="45"/>
        <end position="53"/>
    </location>
</feature>
<feature type="helix" evidence="17">
    <location>
        <begin position="58"/>
        <end position="71"/>
    </location>
</feature>
<feature type="strand" evidence="17">
    <location>
        <begin position="82"/>
        <end position="87"/>
    </location>
</feature>
<feature type="strand" evidence="17">
    <location>
        <begin position="89"/>
        <end position="96"/>
    </location>
</feature>
<feature type="helix" evidence="17">
    <location>
        <begin position="104"/>
        <end position="111"/>
    </location>
</feature>
<feature type="helix" evidence="17">
    <location>
        <begin position="116"/>
        <end position="135"/>
    </location>
</feature>
<feature type="helix" evidence="17">
    <location>
        <begin position="145"/>
        <end position="147"/>
    </location>
</feature>
<feature type="strand" evidence="17">
    <location>
        <begin position="148"/>
        <end position="150"/>
    </location>
</feature>
<feature type="strand" evidence="17">
    <location>
        <begin position="156"/>
        <end position="158"/>
    </location>
</feature>
<feature type="helix" evidence="17">
    <location>
        <begin position="164"/>
        <end position="166"/>
    </location>
</feature>
<feature type="strand" evidence="18">
    <location>
        <begin position="172"/>
        <end position="174"/>
    </location>
</feature>
<feature type="helix" evidence="17">
    <location>
        <begin position="180"/>
        <end position="182"/>
    </location>
</feature>
<feature type="helix" evidence="17">
    <location>
        <begin position="185"/>
        <end position="188"/>
    </location>
</feature>
<feature type="helix" evidence="17">
    <location>
        <begin position="195"/>
        <end position="212"/>
    </location>
</feature>
<feature type="helix" evidence="17">
    <location>
        <begin position="222"/>
        <end position="231"/>
    </location>
</feature>
<feature type="helix" evidence="17">
    <location>
        <begin position="242"/>
        <end position="251"/>
    </location>
</feature>
<feature type="turn" evidence="17">
    <location>
        <begin position="256"/>
        <end position="258"/>
    </location>
</feature>
<feature type="helix" evidence="17">
    <location>
        <begin position="262"/>
        <end position="266"/>
    </location>
</feature>
<feature type="helix" evidence="17">
    <location>
        <begin position="269"/>
        <end position="272"/>
    </location>
</feature>
<feature type="turn" evidence="17">
    <location>
        <begin position="274"/>
        <end position="276"/>
    </location>
</feature>
<feature type="helix" evidence="17">
    <location>
        <begin position="296"/>
        <end position="298"/>
    </location>
</feature>
<feature type="helix" evidence="17">
    <location>
        <begin position="301"/>
        <end position="308"/>
    </location>
</feature>
<feature type="helix" evidence="18">
    <location>
        <begin position="311"/>
        <end position="313"/>
    </location>
</feature>
<feature type="helix" evidence="17">
    <location>
        <begin position="316"/>
        <end position="324"/>
    </location>
</feature>
<feature type="strand" evidence="17">
    <location>
        <begin position="325"/>
        <end position="327"/>
    </location>
</feature>
<feature type="helix" evidence="17">
    <location>
        <begin position="330"/>
        <end position="342"/>
    </location>
</feature>
<feature type="strand" evidence="18">
    <location>
        <begin position="520"/>
        <end position="523"/>
    </location>
</feature>
<feature type="turn" evidence="18">
    <location>
        <begin position="524"/>
        <end position="526"/>
    </location>
</feature>
<feature type="strand" evidence="18">
    <location>
        <begin position="530"/>
        <end position="532"/>
    </location>
</feature>
<feature type="strand" evidence="18">
    <location>
        <begin position="534"/>
        <end position="539"/>
    </location>
</feature>
<feature type="helix" evidence="18">
    <location>
        <begin position="544"/>
        <end position="556"/>
    </location>
</feature>
<feature type="strand" evidence="18">
    <location>
        <begin position="561"/>
        <end position="567"/>
    </location>
</feature>
<feature type="strand" evidence="18">
    <location>
        <begin position="570"/>
        <end position="575"/>
    </location>
</feature>
<feature type="strand" evidence="18">
    <location>
        <begin position="588"/>
        <end position="596"/>
    </location>
</feature>
<feature type="strand" evidence="18">
    <location>
        <begin position="609"/>
        <end position="618"/>
    </location>
</feature>
<feature type="helix" evidence="18">
    <location>
        <begin position="620"/>
        <end position="635"/>
    </location>
</feature>
<organism>
    <name type="scientific">Mus musculus</name>
    <name type="common">Mouse</name>
    <dbReference type="NCBI Taxonomy" id="10090"/>
    <lineage>
        <taxon>Eukaryota</taxon>
        <taxon>Metazoa</taxon>
        <taxon>Chordata</taxon>
        <taxon>Craniata</taxon>
        <taxon>Vertebrata</taxon>
        <taxon>Euteleostomi</taxon>
        <taxon>Mammalia</taxon>
        <taxon>Eutheria</taxon>
        <taxon>Euarchontoglires</taxon>
        <taxon>Glires</taxon>
        <taxon>Rodentia</taxon>
        <taxon>Myomorpha</taxon>
        <taxon>Muroidea</taxon>
        <taxon>Muridae</taxon>
        <taxon>Murinae</taxon>
        <taxon>Mus</taxon>
        <taxon>Mus</taxon>
    </lineage>
</organism>
<name>BRSK2_MOUSE</name>
<dbReference type="EC" id="2.7.11.1"/>
<dbReference type="EC" id="2.7.11.26"/>
<dbReference type="EMBL" id="AY533672">
    <property type="protein sequence ID" value="AAT08447.1"/>
    <property type="molecule type" value="mRNA"/>
</dbReference>
<dbReference type="EMBL" id="AY533673">
    <property type="protein sequence ID" value="AAT08448.1"/>
    <property type="molecule type" value="mRNA"/>
</dbReference>
<dbReference type="EMBL" id="AY533674">
    <property type="protein sequence ID" value="AAT08449.1"/>
    <property type="molecule type" value="mRNA"/>
</dbReference>
<dbReference type="EMBL" id="AY660739">
    <property type="protein sequence ID" value="AAT74618.1"/>
    <property type="molecule type" value="mRNA"/>
</dbReference>
<dbReference type="EMBL" id="AL603836">
    <property type="status" value="NOT_ANNOTATED_CDS"/>
    <property type="molecule type" value="Genomic_DNA"/>
</dbReference>
<dbReference type="EMBL" id="AL772165">
    <property type="status" value="NOT_ANNOTATED_CDS"/>
    <property type="molecule type" value="Genomic_DNA"/>
</dbReference>
<dbReference type="EMBL" id="AK173268">
    <property type="protein sequence ID" value="BAD32546.1"/>
    <property type="molecule type" value="mRNA"/>
</dbReference>
<dbReference type="EMBL" id="BC056498">
    <property type="protein sequence ID" value="AAH56498.1"/>
    <property type="molecule type" value="mRNA"/>
</dbReference>
<dbReference type="CCDS" id="CCDS22021.1">
    <molecule id="Q69Z98-4"/>
</dbReference>
<dbReference type="CCDS" id="CCDS22022.1">
    <molecule id="Q69Z98-3"/>
</dbReference>
<dbReference type="CCDS" id="CCDS22023.1">
    <molecule id="Q69Z98-2"/>
</dbReference>
<dbReference type="RefSeq" id="NP_001009929.1">
    <molecule id="Q69Z98-2"/>
    <property type="nucleotide sequence ID" value="NM_001009929.3"/>
</dbReference>
<dbReference type="RefSeq" id="NP_001009930.1">
    <molecule id="Q69Z98-3"/>
    <property type="nucleotide sequence ID" value="NM_001009930.3"/>
</dbReference>
<dbReference type="RefSeq" id="NP_083702.1">
    <molecule id="Q69Z98-4"/>
    <property type="nucleotide sequence ID" value="NM_029426.2"/>
</dbReference>
<dbReference type="PDB" id="4YNZ">
    <property type="method" value="X-ray"/>
    <property type="resolution" value="2.00 A"/>
    <property type="chains" value="A/B=15-342"/>
</dbReference>
<dbReference type="PDB" id="4YOM">
    <property type="method" value="X-ray"/>
    <property type="resolution" value="2.49 A"/>
    <property type="chains" value="A=519-662, B=1-342"/>
</dbReference>
<dbReference type="PDBsum" id="4YNZ"/>
<dbReference type="PDBsum" id="4YOM"/>
<dbReference type="SMR" id="Q69Z98"/>
<dbReference type="BioGRID" id="217728">
    <property type="interactions" value="68"/>
</dbReference>
<dbReference type="FunCoup" id="Q69Z98">
    <property type="interactions" value="1326"/>
</dbReference>
<dbReference type="STRING" id="10090.ENSMUSP00000074969"/>
<dbReference type="GlyGen" id="Q69Z98">
    <property type="glycosylation" value="1 site"/>
</dbReference>
<dbReference type="iPTMnet" id="Q69Z98"/>
<dbReference type="PhosphoSitePlus" id="Q69Z98"/>
<dbReference type="SwissPalm" id="Q69Z98"/>
<dbReference type="PaxDb" id="10090-ENSMUSP00000134201"/>
<dbReference type="PeptideAtlas" id="Q69Z98"/>
<dbReference type="ProteomicsDB" id="273769">
    <molecule id="Q69Z98-1"/>
</dbReference>
<dbReference type="ProteomicsDB" id="273770">
    <molecule id="Q69Z98-2"/>
</dbReference>
<dbReference type="ProteomicsDB" id="273771">
    <molecule id="Q69Z98-3"/>
</dbReference>
<dbReference type="ProteomicsDB" id="273772">
    <molecule id="Q69Z98-4"/>
</dbReference>
<dbReference type="Pumba" id="Q69Z98"/>
<dbReference type="Antibodypedia" id="22872">
    <property type="antibodies" value="224 antibodies from 35 providers"/>
</dbReference>
<dbReference type="DNASU" id="75770"/>
<dbReference type="Ensembl" id="ENSMUST00000018971.15">
    <molecule id="Q69Z98-4"/>
    <property type="protein sequence ID" value="ENSMUSP00000018971.9"/>
    <property type="gene ID" value="ENSMUSG00000053046.17"/>
</dbReference>
<dbReference type="Ensembl" id="ENSMUST00000075528.12">
    <molecule id="Q69Z98-3"/>
    <property type="protein sequence ID" value="ENSMUSP00000074969.6"/>
    <property type="gene ID" value="ENSMUSG00000053046.17"/>
</dbReference>
<dbReference type="Ensembl" id="ENSMUST00000078200.12">
    <molecule id="Q69Z98-2"/>
    <property type="protein sequence ID" value="ENSMUSP00000077330.6"/>
    <property type="gene ID" value="ENSMUSG00000053046.17"/>
</dbReference>
<dbReference type="Ensembl" id="ENSMUST00000105989.9">
    <molecule id="Q69Z98-2"/>
    <property type="protein sequence ID" value="ENSMUSP00000101610.3"/>
    <property type="gene ID" value="ENSMUSG00000053046.17"/>
</dbReference>
<dbReference type="Ensembl" id="ENSMUST00000174499.8">
    <molecule id="Q69Z98-1"/>
    <property type="protein sequence ID" value="ENSMUSP00000134201.2"/>
    <property type="gene ID" value="ENSMUSG00000053046.17"/>
</dbReference>
<dbReference type="GeneID" id="75770"/>
<dbReference type="KEGG" id="mmu:75770"/>
<dbReference type="UCSC" id="uc009kme.2">
    <molecule id="Q69Z98-2"/>
    <property type="organism name" value="mouse"/>
</dbReference>
<dbReference type="UCSC" id="uc009kmf.2">
    <molecule id="Q69Z98-3"/>
    <property type="organism name" value="mouse"/>
</dbReference>
<dbReference type="UCSC" id="uc009kmg.1">
    <molecule id="Q69Z98-4"/>
    <property type="organism name" value="mouse"/>
</dbReference>
<dbReference type="UCSC" id="uc009kmi.1">
    <molecule id="Q69Z98-1"/>
    <property type="organism name" value="mouse"/>
</dbReference>
<dbReference type="AGR" id="MGI:1923020"/>
<dbReference type="CTD" id="9024"/>
<dbReference type="MGI" id="MGI:1923020">
    <property type="gene designation" value="Brsk2"/>
</dbReference>
<dbReference type="VEuPathDB" id="HostDB:ENSMUSG00000053046"/>
<dbReference type="eggNOG" id="KOG0588">
    <property type="taxonomic scope" value="Eukaryota"/>
</dbReference>
<dbReference type="GeneTree" id="ENSGT00940000157462"/>
<dbReference type="HOGENOM" id="CLU_000288_156_2_1"/>
<dbReference type="InParanoid" id="Q69Z98"/>
<dbReference type="OMA" id="DTHCVPV"/>
<dbReference type="OrthoDB" id="193931at2759"/>
<dbReference type="PhylomeDB" id="Q69Z98"/>
<dbReference type="TreeFam" id="TF313967"/>
<dbReference type="BioGRID-ORCS" id="75770">
    <property type="hits" value="3 hits in 81 CRISPR screens"/>
</dbReference>
<dbReference type="CD-CODE" id="CE726F99">
    <property type="entry name" value="Postsynaptic density"/>
</dbReference>
<dbReference type="EvolutionaryTrace" id="Q69Z98"/>
<dbReference type="PRO" id="PR:Q69Z98"/>
<dbReference type="Proteomes" id="UP000000589">
    <property type="component" value="Chromosome 7"/>
</dbReference>
<dbReference type="RNAct" id="Q69Z98">
    <property type="molecule type" value="protein"/>
</dbReference>
<dbReference type="Bgee" id="ENSMUSG00000053046">
    <property type="expression patterns" value="Expressed in visual cortex and 122 other cell types or tissues"/>
</dbReference>
<dbReference type="ExpressionAtlas" id="Q69Z98">
    <property type="expression patterns" value="baseline and differential"/>
</dbReference>
<dbReference type="GO" id="GO:0005813">
    <property type="term" value="C:centrosome"/>
    <property type="evidence" value="ECO:0007669"/>
    <property type="project" value="UniProtKB-SubCell"/>
</dbReference>
<dbReference type="GO" id="GO:0005783">
    <property type="term" value="C:endoplasmic reticulum"/>
    <property type="evidence" value="ECO:0007669"/>
    <property type="project" value="UniProtKB-SubCell"/>
</dbReference>
<dbReference type="GO" id="GO:0048471">
    <property type="term" value="C:perinuclear region of cytoplasm"/>
    <property type="evidence" value="ECO:0007669"/>
    <property type="project" value="UniProtKB-SubCell"/>
</dbReference>
<dbReference type="GO" id="GO:0005524">
    <property type="term" value="F:ATP binding"/>
    <property type="evidence" value="ECO:0007669"/>
    <property type="project" value="UniProtKB-KW"/>
</dbReference>
<dbReference type="GO" id="GO:0051117">
    <property type="term" value="F:ATPase binding"/>
    <property type="evidence" value="ECO:0007669"/>
    <property type="project" value="Ensembl"/>
</dbReference>
<dbReference type="GO" id="GO:0000287">
    <property type="term" value="F:magnesium ion binding"/>
    <property type="evidence" value="ECO:0000305"/>
    <property type="project" value="UniProtKB"/>
</dbReference>
<dbReference type="GO" id="GO:0019901">
    <property type="term" value="F:protein kinase binding"/>
    <property type="evidence" value="ECO:0000353"/>
    <property type="project" value="UniProtKB"/>
</dbReference>
<dbReference type="GO" id="GO:0106310">
    <property type="term" value="F:protein serine kinase activity"/>
    <property type="evidence" value="ECO:0007669"/>
    <property type="project" value="RHEA"/>
</dbReference>
<dbReference type="GO" id="GO:0004674">
    <property type="term" value="F:protein serine/threonine kinase activity"/>
    <property type="evidence" value="ECO:0000314"/>
    <property type="project" value="UniProtKB"/>
</dbReference>
<dbReference type="GO" id="GO:0050321">
    <property type="term" value="F:tau-protein kinase activity"/>
    <property type="evidence" value="ECO:0000314"/>
    <property type="project" value="UniProtKB"/>
</dbReference>
<dbReference type="GO" id="GO:0030036">
    <property type="term" value="P:actin cytoskeleton organization"/>
    <property type="evidence" value="ECO:0007669"/>
    <property type="project" value="Ensembl"/>
</dbReference>
<dbReference type="GO" id="GO:0007409">
    <property type="term" value="P:axonogenesis"/>
    <property type="evidence" value="ECO:0000315"/>
    <property type="project" value="UniProtKB"/>
</dbReference>
<dbReference type="GO" id="GO:0051301">
    <property type="term" value="P:cell division"/>
    <property type="evidence" value="ECO:0007669"/>
    <property type="project" value="UniProtKB-KW"/>
</dbReference>
<dbReference type="GO" id="GO:0021953">
    <property type="term" value="P:central nervous system neuron differentiation"/>
    <property type="evidence" value="ECO:0000316"/>
    <property type="project" value="MGI"/>
</dbReference>
<dbReference type="GO" id="GO:0036503">
    <property type="term" value="P:ERAD pathway"/>
    <property type="evidence" value="ECO:0007669"/>
    <property type="project" value="Ensembl"/>
</dbReference>
<dbReference type="GO" id="GO:0030010">
    <property type="term" value="P:establishment of cell polarity"/>
    <property type="evidence" value="ECO:0000315"/>
    <property type="project" value="UniProtKB"/>
</dbReference>
<dbReference type="GO" id="GO:0006887">
    <property type="term" value="P:exocytosis"/>
    <property type="evidence" value="ECO:0007669"/>
    <property type="project" value="UniProtKB-KW"/>
</dbReference>
<dbReference type="GO" id="GO:0000086">
    <property type="term" value="P:G2/M transition of mitotic cell cycle"/>
    <property type="evidence" value="ECO:0007669"/>
    <property type="project" value="Ensembl"/>
</dbReference>
<dbReference type="GO" id="GO:0070059">
    <property type="term" value="P:intrinsic apoptotic signaling pathway in response to endoplasmic reticulum stress"/>
    <property type="evidence" value="ECO:0007669"/>
    <property type="project" value="Ensembl"/>
</dbReference>
<dbReference type="GO" id="GO:0090176">
    <property type="term" value="P:microtubule cytoskeleton organization involved in establishment of planar polarity"/>
    <property type="evidence" value="ECO:0000316"/>
    <property type="project" value="ARUK-UCL"/>
</dbReference>
<dbReference type="GO" id="GO:0030182">
    <property type="term" value="P:neuron differentiation"/>
    <property type="evidence" value="ECO:0000316"/>
    <property type="project" value="UniProtKB"/>
</dbReference>
<dbReference type="GO" id="GO:0048812">
    <property type="term" value="P:neuron projection morphogenesis"/>
    <property type="evidence" value="ECO:0000316"/>
    <property type="project" value="MGI"/>
</dbReference>
<dbReference type="GO" id="GO:0006468">
    <property type="term" value="P:protein phosphorylation"/>
    <property type="evidence" value="ECO:0000314"/>
    <property type="project" value="UniProtKB"/>
</dbReference>
<dbReference type="GO" id="GO:0050770">
    <property type="term" value="P:regulation of axonogenesis"/>
    <property type="evidence" value="ECO:0000316"/>
    <property type="project" value="ARUK-UCL"/>
</dbReference>
<dbReference type="GO" id="GO:0061178">
    <property type="term" value="P:regulation of insulin secretion involved in cellular response to glucose stimulus"/>
    <property type="evidence" value="ECO:0000315"/>
    <property type="project" value="UniProtKB"/>
</dbReference>
<dbReference type="GO" id="GO:0010975">
    <property type="term" value="P:regulation of neuron projection development"/>
    <property type="evidence" value="ECO:0000316"/>
    <property type="project" value="ARUK-UCL"/>
</dbReference>
<dbReference type="CDD" id="cd14081">
    <property type="entry name" value="STKc_BRSK1_2"/>
    <property type="match status" value="1"/>
</dbReference>
<dbReference type="CDD" id="cd14340">
    <property type="entry name" value="UBA_BRSK"/>
    <property type="match status" value="1"/>
</dbReference>
<dbReference type="FunFam" id="1.10.510.10:FF:000064">
    <property type="entry name" value="BR serine/threonine-protein kinase 2"/>
    <property type="match status" value="1"/>
</dbReference>
<dbReference type="FunFam" id="3.30.200.20:FF:000003">
    <property type="entry name" value="Non-specific serine/threonine protein kinase"/>
    <property type="match status" value="1"/>
</dbReference>
<dbReference type="Gene3D" id="1.10.510.10">
    <property type="entry name" value="Transferase(Phosphotransferase) domain 1"/>
    <property type="match status" value="1"/>
</dbReference>
<dbReference type="InterPro" id="IPR048622">
    <property type="entry name" value="BRSK1_2-like_UBA"/>
</dbReference>
<dbReference type="InterPro" id="IPR011009">
    <property type="entry name" value="Kinase-like_dom_sf"/>
</dbReference>
<dbReference type="InterPro" id="IPR000719">
    <property type="entry name" value="Prot_kinase_dom"/>
</dbReference>
<dbReference type="InterPro" id="IPR017441">
    <property type="entry name" value="Protein_kinase_ATP_BS"/>
</dbReference>
<dbReference type="InterPro" id="IPR008271">
    <property type="entry name" value="Ser/Thr_kinase_AS"/>
</dbReference>
<dbReference type="PANTHER" id="PTHR24346:SF108">
    <property type="entry name" value="BR SERINE_THREONINE KINASE 1"/>
    <property type="match status" value="1"/>
</dbReference>
<dbReference type="PANTHER" id="PTHR24346">
    <property type="entry name" value="MAP/MICROTUBULE AFFINITY-REGULATING KINASE"/>
    <property type="match status" value="1"/>
</dbReference>
<dbReference type="Pfam" id="PF21122">
    <property type="entry name" value="KA1_BRSK"/>
    <property type="match status" value="1"/>
</dbReference>
<dbReference type="Pfam" id="PF00069">
    <property type="entry name" value="Pkinase"/>
    <property type="match status" value="1"/>
</dbReference>
<dbReference type="Pfam" id="PF21115">
    <property type="entry name" value="UBA_BRSK"/>
    <property type="match status" value="1"/>
</dbReference>
<dbReference type="SMART" id="SM00220">
    <property type="entry name" value="S_TKc"/>
    <property type="match status" value="1"/>
</dbReference>
<dbReference type="SUPFAM" id="SSF56112">
    <property type="entry name" value="Protein kinase-like (PK-like)"/>
    <property type="match status" value="1"/>
</dbReference>
<dbReference type="PROSITE" id="PS00107">
    <property type="entry name" value="PROTEIN_KINASE_ATP"/>
    <property type="match status" value="1"/>
</dbReference>
<dbReference type="PROSITE" id="PS50011">
    <property type="entry name" value="PROTEIN_KINASE_DOM"/>
    <property type="match status" value="1"/>
</dbReference>
<dbReference type="PROSITE" id="PS00108">
    <property type="entry name" value="PROTEIN_KINASE_ST"/>
    <property type="match status" value="1"/>
</dbReference>
<reference key="1">
    <citation type="journal article" date="2005" name="Science">
        <title>Mammalian SAD kinases are required for neuronal polarization.</title>
        <authorList>
            <person name="Kishi M."/>
            <person name="Pan Y.A."/>
            <person name="Crump J.G."/>
            <person name="Sanes J.R."/>
        </authorList>
    </citation>
    <scope>NUCLEOTIDE SEQUENCE [MRNA] (ISOFORMS 2; 3 AND 4)</scope>
    <scope>FUNCTION</scope>
    <scope>MUTAGENESIS OF LYS-49</scope>
    <scope>DISRUPTION PHENOTYPE</scope>
</reference>
<reference key="2">
    <citation type="submission" date="2004-06" db="EMBL/GenBank/DDBJ databases">
        <authorList>
            <person name="Tang W.W."/>
            <person name="Shan Y.X."/>
        </authorList>
    </citation>
    <scope>NUCLEOTIDE SEQUENCE [MRNA] (ISOFORM 4)</scope>
</reference>
<reference key="3">
    <citation type="journal article" date="2009" name="PLoS Biol.">
        <title>Lineage-specific biology revealed by a finished genome assembly of the mouse.</title>
        <authorList>
            <person name="Church D.M."/>
            <person name="Goodstadt L."/>
            <person name="Hillier L.W."/>
            <person name="Zody M.C."/>
            <person name="Goldstein S."/>
            <person name="She X."/>
            <person name="Bult C.J."/>
            <person name="Agarwala R."/>
            <person name="Cherry J.L."/>
            <person name="DiCuccio M."/>
            <person name="Hlavina W."/>
            <person name="Kapustin Y."/>
            <person name="Meric P."/>
            <person name="Maglott D."/>
            <person name="Birtle Z."/>
            <person name="Marques A.C."/>
            <person name="Graves T."/>
            <person name="Zhou S."/>
            <person name="Teague B."/>
            <person name="Potamousis K."/>
            <person name="Churas C."/>
            <person name="Place M."/>
            <person name="Herschleb J."/>
            <person name="Runnheim R."/>
            <person name="Forrest D."/>
            <person name="Amos-Landgraf J."/>
            <person name="Schwartz D.C."/>
            <person name="Cheng Z."/>
            <person name="Lindblad-Toh K."/>
            <person name="Eichler E.E."/>
            <person name="Ponting C.P."/>
        </authorList>
    </citation>
    <scope>NUCLEOTIDE SEQUENCE [LARGE SCALE GENOMIC DNA]</scope>
    <source>
        <strain>C57BL/6J</strain>
    </source>
</reference>
<reference key="4">
    <citation type="journal article" date="2004" name="DNA Res.">
        <title>Prediction of the coding sequences of mouse homologues of KIAA gene: IV. The complete nucleotide sequences of 500 mouse KIAA-homologous cDNAs identified by screening of terminal sequences of cDNA clones randomly sampled from size-fractionated libraries.</title>
        <authorList>
            <person name="Okazaki N."/>
            <person name="Kikuno R."/>
            <person name="Ohara R."/>
            <person name="Inamoto S."/>
            <person name="Koseki H."/>
            <person name="Hiraoka S."/>
            <person name="Saga Y."/>
            <person name="Seino S."/>
            <person name="Nishimura M."/>
            <person name="Kaisho T."/>
            <person name="Hoshino K."/>
            <person name="Kitamura H."/>
            <person name="Nagase T."/>
            <person name="Ohara O."/>
            <person name="Koga H."/>
        </authorList>
    </citation>
    <scope>NUCLEOTIDE SEQUENCE [LARGE SCALE MRNA] OF 31-735 (ISOFORM 1)</scope>
    <source>
        <tissue>Fetal brain</tissue>
    </source>
</reference>
<reference key="5">
    <citation type="journal article" date="2004" name="Genome Res.">
        <title>The status, quality, and expansion of the NIH full-length cDNA project: the Mammalian Gene Collection (MGC).</title>
        <authorList>
            <consortium name="The MGC Project Team"/>
        </authorList>
    </citation>
    <scope>NUCLEOTIDE SEQUENCE [LARGE SCALE MRNA] OF 131-653 (ISOFORM 4)</scope>
    <source>
        <strain>C57BL/6J</strain>
        <tissue>Brain</tissue>
    </source>
</reference>
<reference key="6">
    <citation type="journal article" date="2007" name="Cell">
        <title>LKB1 and SAD kinases define a pathway required for the polarization of cortical neurons.</title>
        <authorList>
            <person name="Barnes A.P."/>
            <person name="Lilley B.N."/>
            <person name="Pan Y.A."/>
            <person name="Plummer L.J."/>
            <person name="Powell A.W."/>
            <person name="Raines A.N."/>
            <person name="Sanes J.R."/>
            <person name="Polleux F."/>
        </authorList>
    </citation>
    <scope>FUNCTION</scope>
    <scope>PHOSPHORYLATION AT THR-175</scope>
    <scope>MUTAGENESIS OF THR-175</scope>
</reference>
<reference key="7">
    <citation type="journal article" date="2010" name="Cell">
        <title>A tissue-specific atlas of mouse protein phosphorylation and expression.</title>
        <authorList>
            <person name="Huttlin E.L."/>
            <person name="Jedrychowski M.P."/>
            <person name="Elias J.E."/>
            <person name="Goswami T."/>
            <person name="Rad R."/>
            <person name="Beausoleil S.A."/>
            <person name="Villen J."/>
            <person name="Haas W."/>
            <person name="Sowa M.E."/>
            <person name="Gygi S.P."/>
        </authorList>
    </citation>
    <scope>PHOSPHORYLATION [LARGE SCALE ANALYSIS] AT SER-383; SER-394; SER-413; SER-424; SER-428; SER-456; THR-460; THR-464; THR-510; SER-513; SER-514 AND SER-521</scope>
    <scope>IDENTIFICATION BY MASS SPECTROMETRY [LARGE SCALE ANALYSIS]</scope>
    <source>
        <tissue>Brain</tissue>
        <tissue>Pancreas</tissue>
        <tissue>Testis</tissue>
    </source>
</reference>
<reference key="8">
    <citation type="journal article" date="2010" name="J. Cell Sci.">
        <title>Persistence of the cell-cycle checkpoint kinase Wee1 in SadA- and SadB-deficient neurons disrupts neuronal polarity.</title>
        <authorList>
            <person name="Muller M."/>
            <person name="Lutter D."/>
            <person name="Puschel A.W."/>
        </authorList>
    </citation>
    <scope>FUNCTION</scope>
</reference>
<reference key="9">
    <citation type="journal article" date="2012" name="J. Biol. Chem.">
        <title>Synapses of amphids defective (SAD-A) kinase promotes glucose-stimulated insulin secretion through activation of p21-activated kinase (PAK1) in pancreatic beta-Cells.</title>
        <authorList>
            <person name="Nie J."/>
            <person name="Sun C."/>
            <person name="Faruque O."/>
            <person name="Ye G."/>
            <person name="Li J."/>
            <person name="Liang Q."/>
            <person name="Chang Z."/>
            <person name="Yang W."/>
            <person name="Han X."/>
            <person name="Shi Y."/>
        </authorList>
    </citation>
    <scope>FUNCTION</scope>
    <scope>CATALYTIC ACTIVITY</scope>
    <scope>INTERACTION WITH PAK1</scope>
</reference>
<reference key="10">
    <citation type="journal article" date="2012" name="J. Biol. Chem.">
        <title>Brain-selective kinase 2 (BRSK2) phosphorylation on PCTAIRE1 negatively regulates glucose-stimulated insulin secretion in pancreatic beta-cells.</title>
        <authorList>
            <person name="Chen X.Y."/>
            <person name="Gu X.T."/>
            <person name="Saiyin H."/>
            <person name="Wan B."/>
            <person name="Zhang Y.J."/>
            <person name="Li J."/>
            <person name="Wang Y.L."/>
            <person name="Gao R."/>
            <person name="Wang Y.F."/>
            <person name="Dong W.P."/>
            <person name="Najjar S.M."/>
            <person name="Zhang C.Y."/>
            <person name="Ding H.F."/>
            <person name="Liu J.O."/>
            <person name="Yu L."/>
        </authorList>
    </citation>
    <scope>FUNCTION</scope>
    <scope>TISSUE SPECIFICITY</scope>
</reference>
<keyword id="KW-0002">3D-structure</keyword>
<keyword id="KW-0025">Alternative splicing</keyword>
<keyword id="KW-0053">Apoptosis</keyword>
<keyword id="KW-0067">ATP-binding</keyword>
<keyword id="KW-0131">Cell cycle</keyword>
<keyword id="KW-0132">Cell division</keyword>
<keyword id="KW-0963">Cytoplasm</keyword>
<keyword id="KW-0206">Cytoskeleton</keyword>
<keyword id="KW-0256">Endoplasmic reticulum</keyword>
<keyword id="KW-0268">Exocytosis</keyword>
<keyword id="KW-0418">Kinase</keyword>
<keyword id="KW-0460">Magnesium</keyword>
<keyword id="KW-0479">Metal-binding</keyword>
<keyword id="KW-0498">Mitosis</keyword>
<keyword id="KW-0524">Neurogenesis</keyword>
<keyword id="KW-0547">Nucleotide-binding</keyword>
<keyword id="KW-0597">Phosphoprotein</keyword>
<keyword id="KW-1185">Reference proteome</keyword>
<keyword id="KW-0723">Serine/threonine-protein kinase</keyword>
<keyword id="KW-0808">Transferase</keyword>
<keyword id="KW-0832">Ubl conjugation</keyword>
<sequence length="735" mass="81733">MTSTGKDGGGAQHAQYVGPYRLEKTLGKGQTGLVKLGIHCVTCQKVAIKIVNREKLSESVLMKVEREIAILKLIEHPHVLKLHDVYENKKYLYLVLEHVSGGELFDYLVKKGRLTPKEARKFFRQIISALDFCHSHSICHRDLKPENLLLDERNNIRIADFGMASLQVGDSLLETSCGSPHYACPEVIRGEKYDGRKADVWSCGVILFALLVGALPFDDDNLRQLLEKVKRGVFHMPHFIPPDCQSLLRGMIEVDAARRLTLEHIQKHIWYIGGKNEPEPEQPIPRKVQIRSLPSLEDIDPDVLDSMHSLGCFRDRNKLLQDLLSEEENQEKMIYFLLLDRKERYPSHEDEDLPPRNEIDPPRKRVDSPMLNRHGKRRPERKSMEVLSVTDGGSPVPARRAIEMAQHGQRSRSISGASSGLSTSPLSSPRVTPHPSPRGSPLPTPKGTPVHTPKESPAGTPNPTPPSSPSVGGVPWRTRLNSIKNSFLGSPRFHRRKLQVPTPEEMSNLTPESSPELAKKSWFGNFINLEKEEQIFVVIKDKPLSSIKADIVHAFLSIPSLSHSVISQTSFRAEYKATGGPAVFQKPVKFQVDITYTEGGEAQKENGIYSVTFTLLSGPSRRFKRVVETIQAQLLSTHDQPSAQHLSDTTNCMEVMTGRLSKCGTPLSNFFDVIKQLFSDEKNGQAAQAPSTPAKRSAHGPLGDSAAAGPGGDTEYPMGKDMAKMGPPAARREQP</sequence>
<accession>Q69Z98</accession>
<accession>Q699J3</accession>
<accession>Q699J4</accession>
<accession>Q6DMN7</accession>
<accession>Q6PHM0</accession>